<organism>
    <name type="scientific">Listeria monocytogenes serovar 1/2a (strain ATCC BAA-679 / EGD-e)</name>
    <dbReference type="NCBI Taxonomy" id="169963"/>
    <lineage>
        <taxon>Bacteria</taxon>
        <taxon>Bacillati</taxon>
        <taxon>Bacillota</taxon>
        <taxon>Bacilli</taxon>
        <taxon>Bacillales</taxon>
        <taxon>Listeriaceae</taxon>
        <taxon>Listeria</taxon>
    </lineage>
</organism>
<accession>Q927L9</accession>
<gene>
    <name evidence="1" type="primary">rplE</name>
    <name type="ordered locus">lmo2620</name>
</gene>
<feature type="chain" id="PRO_0000124944" description="Large ribosomal subunit protein uL5">
    <location>
        <begin position="1"/>
        <end position="179"/>
    </location>
</feature>
<feature type="helix" evidence="3">
    <location>
        <begin position="5"/>
        <end position="11"/>
    </location>
</feature>
<feature type="helix" evidence="3">
    <location>
        <begin position="14"/>
        <end position="20"/>
    </location>
</feature>
<feature type="strand" evidence="3">
    <location>
        <begin position="23"/>
        <end position="28"/>
    </location>
</feature>
<feature type="strand" evidence="3">
    <location>
        <begin position="31"/>
        <end position="37"/>
    </location>
</feature>
<feature type="helix" evidence="4">
    <location>
        <begin position="42"/>
        <end position="44"/>
    </location>
</feature>
<feature type="helix" evidence="3">
    <location>
        <begin position="48"/>
        <end position="60"/>
    </location>
</feature>
<feature type="strand" evidence="3">
    <location>
        <begin position="66"/>
        <end position="72"/>
    </location>
</feature>
<feature type="turn" evidence="3">
    <location>
        <begin position="75"/>
        <end position="78"/>
    </location>
</feature>
<feature type="strand" evidence="3">
    <location>
        <begin position="81"/>
        <end position="91"/>
    </location>
</feature>
<feature type="turn" evidence="3">
    <location>
        <begin position="94"/>
        <end position="98"/>
    </location>
</feature>
<feature type="helix" evidence="3">
    <location>
        <begin position="101"/>
        <end position="105"/>
    </location>
</feature>
<feature type="helix" evidence="3">
    <location>
        <begin position="108"/>
        <end position="110"/>
    </location>
</feature>
<feature type="helix" evidence="3">
    <location>
        <begin position="119"/>
        <end position="121"/>
    </location>
</feature>
<feature type="strand" evidence="3">
    <location>
        <begin position="124"/>
        <end position="132"/>
    </location>
</feature>
<feature type="strand" evidence="3">
    <location>
        <begin position="138"/>
        <end position="141"/>
    </location>
</feature>
<feature type="strand" evidence="3">
    <location>
        <begin position="143"/>
        <end position="145"/>
    </location>
</feature>
<feature type="strand" evidence="3">
    <location>
        <begin position="152"/>
        <end position="159"/>
    </location>
</feature>
<feature type="helix" evidence="3">
    <location>
        <begin position="164"/>
        <end position="173"/>
    </location>
</feature>
<proteinExistence type="evidence at protein level"/>
<reference key="1">
    <citation type="journal article" date="2001" name="Science">
        <title>Comparative genomics of Listeria species.</title>
        <authorList>
            <person name="Glaser P."/>
            <person name="Frangeul L."/>
            <person name="Buchrieser C."/>
            <person name="Rusniok C."/>
            <person name="Amend A."/>
            <person name="Baquero F."/>
            <person name="Berche P."/>
            <person name="Bloecker H."/>
            <person name="Brandt P."/>
            <person name="Chakraborty T."/>
            <person name="Charbit A."/>
            <person name="Chetouani F."/>
            <person name="Couve E."/>
            <person name="de Daruvar A."/>
            <person name="Dehoux P."/>
            <person name="Domann E."/>
            <person name="Dominguez-Bernal G."/>
            <person name="Duchaud E."/>
            <person name="Durant L."/>
            <person name="Dussurget O."/>
            <person name="Entian K.-D."/>
            <person name="Fsihi H."/>
            <person name="Garcia-del Portillo F."/>
            <person name="Garrido P."/>
            <person name="Gautier L."/>
            <person name="Goebel W."/>
            <person name="Gomez-Lopez N."/>
            <person name="Hain T."/>
            <person name="Hauf J."/>
            <person name="Jackson D."/>
            <person name="Jones L.-M."/>
            <person name="Kaerst U."/>
            <person name="Kreft J."/>
            <person name="Kuhn M."/>
            <person name="Kunst F."/>
            <person name="Kurapkat G."/>
            <person name="Madueno E."/>
            <person name="Maitournam A."/>
            <person name="Mata Vicente J."/>
            <person name="Ng E."/>
            <person name="Nedjari H."/>
            <person name="Nordsiek G."/>
            <person name="Novella S."/>
            <person name="de Pablos B."/>
            <person name="Perez-Diaz J.-C."/>
            <person name="Purcell R."/>
            <person name="Remmel B."/>
            <person name="Rose M."/>
            <person name="Schlueter T."/>
            <person name="Simoes N."/>
            <person name="Tierrez A."/>
            <person name="Vazquez-Boland J.-A."/>
            <person name="Voss H."/>
            <person name="Wehland J."/>
            <person name="Cossart P."/>
        </authorList>
    </citation>
    <scope>NUCLEOTIDE SEQUENCE [LARGE SCALE GENOMIC DNA]</scope>
    <source>
        <strain>ATCC BAA-679 / EGD-e</strain>
    </source>
</reference>
<protein>
    <recommendedName>
        <fullName evidence="1">Large ribosomal subunit protein uL5</fullName>
    </recommendedName>
    <alternativeName>
        <fullName evidence="2">50S ribosomal protein L5</fullName>
    </alternativeName>
</protein>
<evidence type="ECO:0000255" key="1">
    <source>
        <dbReference type="HAMAP-Rule" id="MF_01333"/>
    </source>
</evidence>
<evidence type="ECO:0000305" key="2"/>
<evidence type="ECO:0007829" key="3">
    <source>
        <dbReference type="PDB" id="8A57"/>
    </source>
</evidence>
<evidence type="ECO:0007829" key="4">
    <source>
        <dbReference type="PDB" id="8A5I"/>
    </source>
</evidence>
<sequence length="179" mass="19995">MNRLKDQYLKEIVPALMSKFNYDSVMEVPKIDKIVINTGVGDATANAKVLDSAVEELALITGQKPVITKAKNSIAGFRLREGMPIGAKVTLRGERMYDFLDKLVTVSLPRVRDFRGVSKKAFDGRGNYTLGVREQLIFPEIDYDQVSKVRGMDVVIVTTAKSDEESHELLTQLGMPFQK</sequence>
<comment type="function">
    <text evidence="1">This is one of the proteins that bind and probably mediate the attachment of the 5S RNA into the large ribosomal subunit, where it forms part of the central protuberance. In the 70S ribosome it contacts protein S13 of the 30S subunit (bridge B1b), connecting the 2 subunits; this bridge is implicated in subunit movement. Contacts the P site tRNA; the 5S rRNA and some of its associated proteins might help stabilize positioning of ribosome-bound tRNAs.</text>
</comment>
<comment type="subunit">
    <text evidence="1">Part of the 50S ribosomal subunit; part of the 5S rRNA/L5/L18/L25 subcomplex. Contacts the 5S rRNA and the P site tRNA. Forms a bridge to the 30S subunit in the 70S ribosome.</text>
</comment>
<comment type="similarity">
    <text evidence="1">Belongs to the universal ribosomal protein uL5 family.</text>
</comment>
<keyword id="KW-0002">3D-structure</keyword>
<keyword id="KW-1185">Reference proteome</keyword>
<keyword id="KW-0687">Ribonucleoprotein</keyword>
<keyword id="KW-0689">Ribosomal protein</keyword>
<keyword id="KW-0694">RNA-binding</keyword>
<keyword id="KW-0699">rRNA-binding</keyword>
<keyword id="KW-0820">tRNA-binding</keyword>
<dbReference type="EMBL" id="AL591983">
    <property type="protein sequence ID" value="CAD00698.1"/>
    <property type="molecule type" value="Genomic_DNA"/>
</dbReference>
<dbReference type="PIR" id="AD1402">
    <property type="entry name" value="AD1402"/>
</dbReference>
<dbReference type="RefSeq" id="NP_466143.1">
    <property type="nucleotide sequence ID" value="NC_003210.1"/>
</dbReference>
<dbReference type="RefSeq" id="WP_003720938.1">
    <property type="nucleotide sequence ID" value="NZ_CP149495.1"/>
</dbReference>
<dbReference type="PDB" id="7NHN">
    <property type="method" value="EM"/>
    <property type="resolution" value="2.90 A"/>
    <property type="chains" value="J=1-179"/>
</dbReference>
<dbReference type="PDB" id="8A57">
    <property type="method" value="EM"/>
    <property type="resolution" value="2.30 A"/>
    <property type="chains" value="J=1-179"/>
</dbReference>
<dbReference type="PDB" id="8A5I">
    <property type="method" value="EM"/>
    <property type="resolution" value="2.30 A"/>
    <property type="chains" value="J=1-179"/>
</dbReference>
<dbReference type="PDB" id="8A63">
    <property type="method" value="EM"/>
    <property type="resolution" value="3.10 A"/>
    <property type="chains" value="J=1-179"/>
</dbReference>
<dbReference type="PDBsum" id="7NHN"/>
<dbReference type="PDBsum" id="8A57"/>
<dbReference type="PDBsum" id="8A5I"/>
<dbReference type="PDBsum" id="8A63"/>
<dbReference type="EMDB" id="EMD-12334"/>
<dbReference type="EMDB" id="EMD-15161"/>
<dbReference type="EMDB" id="EMD-15175"/>
<dbReference type="EMDB" id="EMD-15204"/>
<dbReference type="SMR" id="Q927L9"/>
<dbReference type="STRING" id="169963.gene:17595338"/>
<dbReference type="PaxDb" id="169963-lmo2620"/>
<dbReference type="EnsemblBacteria" id="CAD00698">
    <property type="protein sequence ID" value="CAD00698"/>
    <property type="gene ID" value="CAD00698"/>
</dbReference>
<dbReference type="GeneID" id="93240501"/>
<dbReference type="GeneID" id="987192"/>
<dbReference type="KEGG" id="lmo:lmo2620"/>
<dbReference type="PATRIC" id="fig|169963.11.peg.2684"/>
<dbReference type="eggNOG" id="COG0094">
    <property type="taxonomic scope" value="Bacteria"/>
</dbReference>
<dbReference type="HOGENOM" id="CLU_061015_2_1_9"/>
<dbReference type="OrthoDB" id="9806626at2"/>
<dbReference type="PhylomeDB" id="Q927L9"/>
<dbReference type="BioCyc" id="LMON169963:LMO2620-MONOMER"/>
<dbReference type="Proteomes" id="UP000000817">
    <property type="component" value="Chromosome"/>
</dbReference>
<dbReference type="GO" id="GO:0022625">
    <property type="term" value="C:cytosolic large ribosomal subunit"/>
    <property type="evidence" value="ECO:0000318"/>
    <property type="project" value="GO_Central"/>
</dbReference>
<dbReference type="GO" id="GO:0003723">
    <property type="term" value="F:RNA binding"/>
    <property type="evidence" value="ECO:0000318"/>
    <property type="project" value="GO_Central"/>
</dbReference>
<dbReference type="GO" id="GO:0019843">
    <property type="term" value="F:rRNA binding"/>
    <property type="evidence" value="ECO:0007669"/>
    <property type="project" value="UniProtKB-UniRule"/>
</dbReference>
<dbReference type="GO" id="GO:0003735">
    <property type="term" value="F:structural constituent of ribosome"/>
    <property type="evidence" value="ECO:0000318"/>
    <property type="project" value="GO_Central"/>
</dbReference>
<dbReference type="GO" id="GO:0000049">
    <property type="term" value="F:tRNA binding"/>
    <property type="evidence" value="ECO:0007669"/>
    <property type="project" value="UniProtKB-UniRule"/>
</dbReference>
<dbReference type="GO" id="GO:0006412">
    <property type="term" value="P:translation"/>
    <property type="evidence" value="ECO:0000318"/>
    <property type="project" value="GO_Central"/>
</dbReference>
<dbReference type="FunFam" id="3.30.1440.10:FF:000001">
    <property type="entry name" value="50S ribosomal protein L5"/>
    <property type="match status" value="1"/>
</dbReference>
<dbReference type="Gene3D" id="3.30.1440.10">
    <property type="match status" value="1"/>
</dbReference>
<dbReference type="HAMAP" id="MF_01333_B">
    <property type="entry name" value="Ribosomal_uL5_B"/>
    <property type="match status" value="1"/>
</dbReference>
<dbReference type="InterPro" id="IPR002132">
    <property type="entry name" value="Ribosomal_uL5"/>
</dbReference>
<dbReference type="InterPro" id="IPR020930">
    <property type="entry name" value="Ribosomal_uL5_bac-type"/>
</dbReference>
<dbReference type="InterPro" id="IPR031309">
    <property type="entry name" value="Ribosomal_uL5_C"/>
</dbReference>
<dbReference type="InterPro" id="IPR020929">
    <property type="entry name" value="Ribosomal_uL5_CS"/>
</dbReference>
<dbReference type="InterPro" id="IPR022803">
    <property type="entry name" value="Ribosomal_uL5_dom_sf"/>
</dbReference>
<dbReference type="InterPro" id="IPR031310">
    <property type="entry name" value="Ribosomal_uL5_N"/>
</dbReference>
<dbReference type="NCBIfam" id="NF000585">
    <property type="entry name" value="PRK00010.1"/>
    <property type="match status" value="1"/>
</dbReference>
<dbReference type="PANTHER" id="PTHR11994">
    <property type="entry name" value="60S RIBOSOMAL PROTEIN L11-RELATED"/>
    <property type="match status" value="1"/>
</dbReference>
<dbReference type="Pfam" id="PF00281">
    <property type="entry name" value="Ribosomal_L5"/>
    <property type="match status" value="1"/>
</dbReference>
<dbReference type="Pfam" id="PF00673">
    <property type="entry name" value="Ribosomal_L5_C"/>
    <property type="match status" value="1"/>
</dbReference>
<dbReference type="PIRSF" id="PIRSF002161">
    <property type="entry name" value="Ribosomal_L5"/>
    <property type="match status" value="1"/>
</dbReference>
<dbReference type="SUPFAM" id="SSF55282">
    <property type="entry name" value="RL5-like"/>
    <property type="match status" value="1"/>
</dbReference>
<dbReference type="PROSITE" id="PS00358">
    <property type="entry name" value="RIBOSOMAL_L5"/>
    <property type="match status" value="1"/>
</dbReference>
<name>RL5_LISMO</name>